<gene>
    <name type="ordered locus">YPN_1807</name>
    <name type="ORF">YP516_2007</name>
</gene>
<keyword id="KW-0997">Cell inner membrane</keyword>
<keyword id="KW-1003">Cell membrane</keyword>
<keyword id="KW-0472">Membrane</keyword>
<keyword id="KW-0812">Transmembrane</keyword>
<keyword id="KW-1133">Transmembrane helix</keyword>
<accession>Q1CIP4</accession>
<accession>C4GTA7</accession>
<organism>
    <name type="scientific">Yersinia pestis bv. Antiqua (strain Nepal516)</name>
    <dbReference type="NCBI Taxonomy" id="377628"/>
    <lineage>
        <taxon>Bacteria</taxon>
        <taxon>Pseudomonadati</taxon>
        <taxon>Pseudomonadota</taxon>
        <taxon>Gammaproteobacteria</taxon>
        <taxon>Enterobacterales</taxon>
        <taxon>Yersiniaceae</taxon>
        <taxon>Yersinia</taxon>
    </lineage>
</organism>
<name>Y1807_YERPN</name>
<proteinExistence type="inferred from homology"/>
<sequence length="353" mass="39264">MSEPLKPRIDFEQPLQSLDEPVLKSAQAFDEQAAEKFYPAAPELDAEDEEGRVEGLVNAALKPKRSLWRKMVTAGMVILGASVIAQSVQWVNQAWQQQDWIALGATTAGGLIILAGVGSVVTEWRRLYHLRQRAEERDIARALLVSHGVGQGRVFCEKLARQAGLDQGHPALQRWQASLHETHNDREVVELYAKLVQPALDNQARAEISRYAAESALMIAVSPLALVDMAFIAWRNIRLINRIAALYGIELGYFSRIRLFRLVLLNIAFAGASELVREVGMDWLSQDLAARLSARAAQGIGAGLLTARLGIKAMELCRPLPWLEGDKPKLGDFRRQLMNQLKNTLPKKDKTAH</sequence>
<feature type="chain" id="PRO_1000064859" description="UPF0283 membrane protein YPN_1807">
    <location>
        <begin position="1"/>
        <end position="353"/>
    </location>
</feature>
<feature type="transmembrane region" description="Helical" evidence="1">
    <location>
        <begin position="71"/>
        <end position="91"/>
    </location>
</feature>
<feature type="transmembrane region" description="Helical" evidence="1">
    <location>
        <begin position="101"/>
        <end position="121"/>
    </location>
</feature>
<feature type="transmembrane region" description="Helical" evidence="1">
    <location>
        <begin position="214"/>
        <end position="234"/>
    </location>
</feature>
<dbReference type="EMBL" id="CP000305">
    <property type="protein sequence ID" value="ABG18136.1"/>
    <property type="molecule type" value="Genomic_DNA"/>
</dbReference>
<dbReference type="EMBL" id="ACNQ01000010">
    <property type="protein sequence ID" value="EEO76708.1"/>
    <property type="molecule type" value="Genomic_DNA"/>
</dbReference>
<dbReference type="RefSeq" id="WP_002210980.1">
    <property type="nucleotide sequence ID" value="NZ_ACNQ01000010.1"/>
</dbReference>
<dbReference type="KEGG" id="ypn:YPN_1807"/>
<dbReference type="HOGENOM" id="CLU_057693_2_0_6"/>
<dbReference type="Proteomes" id="UP000008936">
    <property type="component" value="Chromosome"/>
</dbReference>
<dbReference type="GO" id="GO:0005886">
    <property type="term" value="C:plasma membrane"/>
    <property type="evidence" value="ECO:0007669"/>
    <property type="project" value="UniProtKB-SubCell"/>
</dbReference>
<dbReference type="HAMAP" id="MF_01085">
    <property type="entry name" value="UPF0283"/>
    <property type="match status" value="1"/>
</dbReference>
<dbReference type="InterPro" id="IPR021147">
    <property type="entry name" value="DUF697"/>
</dbReference>
<dbReference type="InterPro" id="IPR006507">
    <property type="entry name" value="UPF0283"/>
</dbReference>
<dbReference type="NCBIfam" id="TIGR01620">
    <property type="entry name" value="hyp_HI0043"/>
    <property type="match status" value="1"/>
</dbReference>
<dbReference type="PANTHER" id="PTHR39342">
    <property type="entry name" value="UPF0283 MEMBRANE PROTEIN YCJF"/>
    <property type="match status" value="1"/>
</dbReference>
<dbReference type="PANTHER" id="PTHR39342:SF1">
    <property type="entry name" value="UPF0283 MEMBRANE PROTEIN YCJF"/>
    <property type="match status" value="1"/>
</dbReference>
<dbReference type="Pfam" id="PF05128">
    <property type="entry name" value="DUF697"/>
    <property type="match status" value="1"/>
</dbReference>
<comment type="subcellular location">
    <subcellularLocation>
        <location evidence="1">Cell inner membrane</location>
        <topology evidence="1">Multi-pass membrane protein</topology>
    </subcellularLocation>
</comment>
<comment type="similarity">
    <text evidence="1">Belongs to the UPF0283 family.</text>
</comment>
<evidence type="ECO:0000255" key="1">
    <source>
        <dbReference type="HAMAP-Rule" id="MF_01085"/>
    </source>
</evidence>
<reference key="1">
    <citation type="journal article" date="2006" name="J. Bacteriol.">
        <title>Complete genome sequence of Yersinia pestis strains Antiqua and Nepal516: evidence of gene reduction in an emerging pathogen.</title>
        <authorList>
            <person name="Chain P.S.G."/>
            <person name="Hu P."/>
            <person name="Malfatti S.A."/>
            <person name="Radnedge L."/>
            <person name="Larimer F."/>
            <person name="Vergez L.M."/>
            <person name="Worsham P."/>
            <person name="Chu M.C."/>
            <person name="Andersen G.L."/>
        </authorList>
    </citation>
    <scope>NUCLEOTIDE SEQUENCE [LARGE SCALE GENOMIC DNA]</scope>
    <source>
        <strain>Nepal516</strain>
    </source>
</reference>
<reference key="2">
    <citation type="submission" date="2009-04" db="EMBL/GenBank/DDBJ databases">
        <title>Yersinia pestis Nepal516A whole genome shotgun sequencing project.</title>
        <authorList>
            <person name="Plunkett G. III"/>
            <person name="Anderson B.D."/>
            <person name="Baumler D.J."/>
            <person name="Burland V."/>
            <person name="Cabot E.L."/>
            <person name="Glasner J.D."/>
            <person name="Mau B."/>
            <person name="Neeno-Eckwall E."/>
            <person name="Perna N.T."/>
            <person name="Munk A.C."/>
            <person name="Tapia R."/>
            <person name="Green L.D."/>
            <person name="Rogers Y.C."/>
            <person name="Detter J.C."/>
            <person name="Bruce D.C."/>
            <person name="Brettin T.S."/>
        </authorList>
    </citation>
    <scope>NUCLEOTIDE SEQUENCE [LARGE SCALE GENOMIC DNA]</scope>
    <source>
        <strain>Nepal516</strain>
    </source>
</reference>
<protein>
    <recommendedName>
        <fullName evidence="1">UPF0283 membrane protein YPN_1807</fullName>
    </recommendedName>
</protein>